<keyword id="KW-0067">ATP-binding</keyword>
<keyword id="KW-0436">Ligase</keyword>
<keyword id="KW-0547">Nucleotide-binding</keyword>
<keyword id="KW-0648">Protein biosynthesis</keyword>
<keyword id="KW-1185">Reference proteome</keyword>
<name>GATC_ACET2</name>
<dbReference type="EC" id="6.3.5.-" evidence="1"/>
<dbReference type="EMBL" id="CP000568">
    <property type="protein sequence ID" value="ABN52265.1"/>
    <property type="molecule type" value="Genomic_DNA"/>
</dbReference>
<dbReference type="RefSeq" id="WP_003515618.1">
    <property type="nucleotide sequence ID" value="NC_009012.1"/>
</dbReference>
<dbReference type="SMR" id="A3DE86"/>
<dbReference type="STRING" id="203119.Cthe_1033"/>
<dbReference type="GeneID" id="35806073"/>
<dbReference type="KEGG" id="cth:Cthe_1033"/>
<dbReference type="eggNOG" id="COG0721">
    <property type="taxonomic scope" value="Bacteria"/>
</dbReference>
<dbReference type="HOGENOM" id="CLU_105899_1_2_9"/>
<dbReference type="OrthoDB" id="9813938at2"/>
<dbReference type="Proteomes" id="UP000002145">
    <property type="component" value="Chromosome"/>
</dbReference>
<dbReference type="GO" id="GO:0050566">
    <property type="term" value="F:asparaginyl-tRNA synthase (glutamine-hydrolyzing) activity"/>
    <property type="evidence" value="ECO:0007669"/>
    <property type="project" value="RHEA"/>
</dbReference>
<dbReference type="GO" id="GO:0005524">
    <property type="term" value="F:ATP binding"/>
    <property type="evidence" value="ECO:0007669"/>
    <property type="project" value="UniProtKB-KW"/>
</dbReference>
<dbReference type="GO" id="GO:0050567">
    <property type="term" value="F:glutaminyl-tRNA synthase (glutamine-hydrolyzing) activity"/>
    <property type="evidence" value="ECO:0007669"/>
    <property type="project" value="UniProtKB-UniRule"/>
</dbReference>
<dbReference type="GO" id="GO:0070681">
    <property type="term" value="P:glutaminyl-tRNAGln biosynthesis via transamidation"/>
    <property type="evidence" value="ECO:0007669"/>
    <property type="project" value="TreeGrafter"/>
</dbReference>
<dbReference type="GO" id="GO:0006450">
    <property type="term" value="P:regulation of translational fidelity"/>
    <property type="evidence" value="ECO:0007669"/>
    <property type="project" value="InterPro"/>
</dbReference>
<dbReference type="GO" id="GO:0006412">
    <property type="term" value="P:translation"/>
    <property type="evidence" value="ECO:0007669"/>
    <property type="project" value="UniProtKB-UniRule"/>
</dbReference>
<dbReference type="Gene3D" id="1.10.20.60">
    <property type="entry name" value="Glu-tRNAGln amidotransferase C subunit, N-terminal domain"/>
    <property type="match status" value="1"/>
</dbReference>
<dbReference type="HAMAP" id="MF_00122">
    <property type="entry name" value="GatC"/>
    <property type="match status" value="1"/>
</dbReference>
<dbReference type="InterPro" id="IPR036113">
    <property type="entry name" value="Asp/Glu-ADT_sf_sub_c"/>
</dbReference>
<dbReference type="InterPro" id="IPR003837">
    <property type="entry name" value="GatC"/>
</dbReference>
<dbReference type="NCBIfam" id="TIGR00135">
    <property type="entry name" value="gatC"/>
    <property type="match status" value="1"/>
</dbReference>
<dbReference type="PANTHER" id="PTHR15004">
    <property type="entry name" value="GLUTAMYL-TRNA(GLN) AMIDOTRANSFERASE SUBUNIT C, MITOCHONDRIAL"/>
    <property type="match status" value="1"/>
</dbReference>
<dbReference type="PANTHER" id="PTHR15004:SF0">
    <property type="entry name" value="GLUTAMYL-TRNA(GLN) AMIDOTRANSFERASE SUBUNIT C, MITOCHONDRIAL"/>
    <property type="match status" value="1"/>
</dbReference>
<dbReference type="Pfam" id="PF02686">
    <property type="entry name" value="GatC"/>
    <property type="match status" value="1"/>
</dbReference>
<dbReference type="SUPFAM" id="SSF141000">
    <property type="entry name" value="Glu-tRNAGln amidotransferase C subunit"/>
    <property type="match status" value="1"/>
</dbReference>
<proteinExistence type="inferred from homology"/>
<sequence>MKVDKETIEYVANLARLRLSEKEKEKLALDLESIISYVDKLNELDTSKIIPTDHVIPIKNVFRDDEVRDSYPKDKMLMNAPEKEDGCFKVPKVVE</sequence>
<protein>
    <recommendedName>
        <fullName evidence="1">Aspartyl/glutamyl-tRNA(Asn/Gln) amidotransferase subunit C</fullName>
        <shortName evidence="1">Asp/Glu-ADT subunit C</shortName>
        <ecNumber evidence="1">6.3.5.-</ecNumber>
    </recommendedName>
</protein>
<accession>A3DE86</accession>
<comment type="function">
    <text evidence="1">Allows the formation of correctly charged Asn-tRNA(Asn) or Gln-tRNA(Gln) through the transamidation of misacylated Asp-tRNA(Asn) or Glu-tRNA(Gln) in organisms which lack either or both of asparaginyl-tRNA or glutaminyl-tRNA synthetases. The reaction takes place in the presence of glutamine and ATP through an activated phospho-Asp-tRNA(Asn) or phospho-Glu-tRNA(Gln).</text>
</comment>
<comment type="catalytic activity">
    <reaction evidence="1">
        <text>L-glutamyl-tRNA(Gln) + L-glutamine + ATP + H2O = L-glutaminyl-tRNA(Gln) + L-glutamate + ADP + phosphate + H(+)</text>
        <dbReference type="Rhea" id="RHEA:17521"/>
        <dbReference type="Rhea" id="RHEA-COMP:9681"/>
        <dbReference type="Rhea" id="RHEA-COMP:9684"/>
        <dbReference type="ChEBI" id="CHEBI:15377"/>
        <dbReference type="ChEBI" id="CHEBI:15378"/>
        <dbReference type="ChEBI" id="CHEBI:29985"/>
        <dbReference type="ChEBI" id="CHEBI:30616"/>
        <dbReference type="ChEBI" id="CHEBI:43474"/>
        <dbReference type="ChEBI" id="CHEBI:58359"/>
        <dbReference type="ChEBI" id="CHEBI:78520"/>
        <dbReference type="ChEBI" id="CHEBI:78521"/>
        <dbReference type="ChEBI" id="CHEBI:456216"/>
    </reaction>
</comment>
<comment type="catalytic activity">
    <reaction evidence="1">
        <text>L-aspartyl-tRNA(Asn) + L-glutamine + ATP + H2O = L-asparaginyl-tRNA(Asn) + L-glutamate + ADP + phosphate + 2 H(+)</text>
        <dbReference type="Rhea" id="RHEA:14513"/>
        <dbReference type="Rhea" id="RHEA-COMP:9674"/>
        <dbReference type="Rhea" id="RHEA-COMP:9677"/>
        <dbReference type="ChEBI" id="CHEBI:15377"/>
        <dbReference type="ChEBI" id="CHEBI:15378"/>
        <dbReference type="ChEBI" id="CHEBI:29985"/>
        <dbReference type="ChEBI" id="CHEBI:30616"/>
        <dbReference type="ChEBI" id="CHEBI:43474"/>
        <dbReference type="ChEBI" id="CHEBI:58359"/>
        <dbReference type="ChEBI" id="CHEBI:78515"/>
        <dbReference type="ChEBI" id="CHEBI:78516"/>
        <dbReference type="ChEBI" id="CHEBI:456216"/>
    </reaction>
</comment>
<comment type="subunit">
    <text evidence="1">Heterotrimer of A, B and C subunits.</text>
</comment>
<comment type="similarity">
    <text evidence="1">Belongs to the GatC family.</text>
</comment>
<evidence type="ECO:0000255" key="1">
    <source>
        <dbReference type="HAMAP-Rule" id="MF_00122"/>
    </source>
</evidence>
<organism>
    <name type="scientific">Acetivibrio thermocellus (strain ATCC 27405 / DSM 1237 / JCM 9322 / NBRC 103400 / NCIMB 10682 / NRRL B-4536 / VPI 7372)</name>
    <name type="common">Clostridium thermocellum</name>
    <dbReference type="NCBI Taxonomy" id="203119"/>
    <lineage>
        <taxon>Bacteria</taxon>
        <taxon>Bacillati</taxon>
        <taxon>Bacillota</taxon>
        <taxon>Clostridia</taxon>
        <taxon>Eubacteriales</taxon>
        <taxon>Oscillospiraceae</taxon>
        <taxon>Acetivibrio</taxon>
    </lineage>
</organism>
<feature type="chain" id="PRO_1000016110" description="Aspartyl/glutamyl-tRNA(Asn/Gln) amidotransferase subunit C">
    <location>
        <begin position="1"/>
        <end position="95"/>
    </location>
</feature>
<gene>
    <name evidence="1" type="primary">gatC</name>
    <name type="ordered locus">Cthe_1033</name>
</gene>
<reference key="1">
    <citation type="submission" date="2007-02" db="EMBL/GenBank/DDBJ databases">
        <title>Complete sequence of Clostridium thermocellum ATCC 27405.</title>
        <authorList>
            <consortium name="US DOE Joint Genome Institute"/>
            <person name="Copeland A."/>
            <person name="Lucas S."/>
            <person name="Lapidus A."/>
            <person name="Barry K."/>
            <person name="Detter J.C."/>
            <person name="Glavina del Rio T."/>
            <person name="Hammon N."/>
            <person name="Israni S."/>
            <person name="Dalin E."/>
            <person name="Tice H."/>
            <person name="Pitluck S."/>
            <person name="Chertkov O."/>
            <person name="Brettin T."/>
            <person name="Bruce D."/>
            <person name="Han C."/>
            <person name="Tapia R."/>
            <person name="Gilna P."/>
            <person name="Schmutz J."/>
            <person name="Larimer F."/>
            <person name="Land M."/>
            <person name="Hauser L."/>
            <person name="Kyrpides N."/>
            <person name="Mikhailova N."/>
            <person name="Wu J.H.D."/>
            <person name="Newcomb M."/>
            <person name="Richardson P."/>
        </authorList>
    </citation>
    <scope>NUCLEOTIDE SEQUENCE [LARGE SCALE GENOMIC DNA]</scope>
    <source>
        <strain>ATCC 27405 / DSM 1237 / JCM 9322 / NBRC 103400 / NCIMB 10682 / NRRL B-4536 / VPI 7372</strain>
    </source>
</reference>